<name>ASZ1_SAIBB</name>
<gene>
    <name type="primary">ASZ1</name>
    <name type="synonym">GASZ</name>
</gene>
<sequence>MATSALRGLAVAGGGESSESEDDGWEIGYLDRTSQKLKGQMLPIEEKKEKFKKALTTGDVSLVQELLDSGIISVDATFRYGWTPLMYAASVANAELVRVLLDRGANASFEKDKQTILITACSAHGSEEQILKCVELLLSRNADPNVACRRLMTPIMYAARDGHTQVVALLVASGAEVNTQDENGYTALTWAARQGHKSIVLKLLELGANKMLQTKDGKLPSEIAKRNKHHEIFNLLSFTLNPLEGKLQQLTKEETICKILTTDSDRENDHIFSSYAEFGDLEVFLHGLGLEHMTDLLKERDITLRQLLTMREDEFTKNGFASKDQQKILAALKELEVEEIQFGELSEEAKLEISGDEFLNFLLKLNKQCGHLITAVQNIITELPVNSQKIALEWASPQNFTSVCEELVNNVEDLSEEVCNLKDLIQKLQNERENDPTHIPLREEVSTWNSRILKRTAITVCGFGFLLFICKITFQRK</sequence>
<accession>Q09YH1</accession>
<evidence type="ECO:0000250" key="1"/>
<evidence type="ECO:0000250" key="2">
    <source>
        <dbReference type="UniProtKB" id="Q8VD46"/>
    </source>
</evidence>
<evidence type="ECO:0000256" key="3">
    <source>
        <dbReference type="SAM" id="MobiDB-lite"/>
    </source>
</evidence>
<reference key="1">
    <citation type="submission" date="2006-09" db="EMBL/GenBank/DDBJ databases">
        <title>NISC comparative sequencing initiative.</title>
        <authorList>
            <person name="Antonellis A."/>
            <person name="Ayele K."/>
            <person name="Benjamin B."/>
            <person name="Blakesley R.W."/>
            <person name="Boakye A."/>
            <person name="Bouffard G.G."/>
            <person name="Brinkley C."/>
            <person name="Brooks S."/>
            <person name="Chu G."/>
            <person name="Coleman H."/>
            <person name="Engle J."/>
            <person name="Gestole M."/>
            <person name="Greene A."/>
            <person name="Guan X."/>
            <person name="Gupta J."/>
            <person name="Haghighi P."/>
            <person name="Han J."/>
            <person name="Hansen N."/>
            <person name="Ho S.-L."/>
            <person name="Hu P."/>
            <person name="Hunter G."/>
            <person name="Hurle B."/>
            <person name="Idol J.R."/>
            <person name="Kwong P."/>
            <person name="Laric P."/>
            <person name="Larson S."/>
            <person name="Lee-Lin S.-Q."/>
            <person name="Legaspi R."/>
            <person name="Madden M."/>
            <person name="Maduro Q.L."/>
            <person name="Maduro V.B."/>
            <person name="Margulies E.H."/>
            <person name="Masiello C."/>
            <person name="Maskeri B."/>
            <person name="McDowell J."/>
            <person name="Mojidi H.A."/>
            <person name="Mullikin J.C."/>
            <person name="Oestreicher J.S."/>
            <person name="Park M."/>
            <person name="Portnoy M.E."/>
            <person name="Prasad A."/>
            <person name="Puri O."/>
            <person name="Reddix-Dugue N."/>
            <person name="Schandler K."/>
            <person name="Schueler M.G."/>
            <person name="Sison C."/>
            <person name="Stantripop S."/>
            <person name="Stephen E."/>
            <person name="Taye A."/>
            <person name="Thomas J.W."/>
            <person name="Thomas P.J."/>
            <person name="Tsipouri V."/>
            <person name="Ung L."/>
            <person name="Vogt J.L."/>
            <person name="Wetherby K.D."/>
            <person name="Young A."/>
            <person name="Green E.D."/>
        </authorList>
    </citation>
    <scope>NUCLEOTIDE SEQUENCE [LARGE SCALE GENOMIC DNA]</scope>
</reference>
<feature type="chain" id="PRO_0000260399" description="Ankyrin repeat, SAM and basic leucine zipper domain-containing protein 1">
    <location>
        <begin position="1"/>
        <end position="477"/>
    </location>
</feature>
<feature type="repeat" description="ANK 1">
    <location>
        <begin position="46"/>
        <end position="76"/>
    </location>
</feature>
<feature type="repeat" description="ANK 2">
    <location>
        <begin position="80"/>
        <end position="109"/>
    </location>
</feature>
<feature type="repeat" description="ANK 3">
    <location>
        <begin position="112"/>
        <end position="146"/>
    </location>
</feature>
<feature type="repeat" description="ANK 4">
    <location>
        <begin position="150"/>
        <end position="179"/>
    </location>
</feature>
<feature type="repeat" description="ANK 5">
    <location>
        <begin position="183"/>
        <end position="212"/>
    </location>
</feature>
<feature type="repeat" description="ANK 6">
    <location>
        <begin position="216"/>
        <end position="245"/>
    </location>
</feature>
<feature type="domain" description="SAM">
    <location>
        <begin position="274"/>
        <end position="336"/>
    </location>
</feature>
<feature type="region of interest" description="Disordered" evidence="3">
    <location>
        <begin position="1"/>
        <end position="24"/>
    </location>
</feature>
<feature type="modified residue" description="Phosphoserine" evidence="2">
    <location>
        <position position="17"/>
    </location>
</feature>
<feature type="modified residue" description="Phosphoserine" evidence="2">
    <location>
        <position position="18"/>
    </location>
</feature>
<feature type="modified residue" description="Phosphoserine" evidence="2">
    <location>
        <position position="20"/>
    </location>
</feature>
<keyword id="KW-0040">ANK repeat</keyword>
<keyword id="KW-0963">Cytoplasm</keyword>
<keyword id="KW-0217">Developmental protein</keyword>
<keyword id="KW-0221">Differentiation</keyword>
<keyword id="KW-0469">Meiosis</keyword>
<keyword id="KW-0597">Phosphoprotein</keyword>
<keyword id="KW-1185">Reference proteome</keyword>
<keyword id="KW-0677">Repeat</keyword>
<keyword id="KW-0943">RNA-mediated gene silencing</keyword>
<keyword id="KW-0744">Spermatogenesis</keyword>
<dbReference type="EMBL" id="DP000180">
    <property type="protein sequence ID" value="ABI75309.1"/>
    <property type="molecule type" value="Genomic_DNA"/>
</dbReference>
<dbReference type="SMR" id="Q09YH1"/>
<dbReference type="STRING" id="39432.ENSSBOP00000002815"/>
<dbReference type="Proteomes" id="UP000233220">
    <property type="component" value="Whole Genome Shotgun Assembly"/>
</dbReference>
<dbReference type="GO" id="GO:0071546">
    <property type="term" value="C:pi-body"/>
    <property type="evidence" value="ECO:0000250"/>
    <property type="project" value="UniProtKB"/>
</dbReference>
<dbReference type="GO" id="GO:0030154">
    <property type="term" value="P:cell differentiation"/>
    <property type="evidence" value="ECO:0007669"/>
    <property type="project" value="UniProtKB-KW"/>
</dbReference>
<dbReference type="GO" id="GO:0007140">
    <property type="term" value="P:male meiotic nuclear division"/>
    <property type="evidence" value="ECO:0000250"/>
    <property type="project" value="UniProtKB"/>
</dbReference>
<dbReference type="GO" id="GO:0031047">
    <property type="term" value="P:regulatory ncRNA-mediated gene silencing"/>
    <property type="evidence" value="ECO:0007669"/>
    <property type="project" value="UniProtKB-KW"/>
</dbReference>
<dbReference type="GO" id="GO:0007283">
    <property type="term" value="P:spermatogenesis"/>
    <property type="evidence" value="ECO:0000250"/>
    <property type="project" value="UniProtKB"/>
</dbReference>
<dbReference type="GO" id="GO:0010526">
    <property type="term" value="P:transposable element silencing"/>
    <property type="evidence" value="ECO:0000250"/>
    <property type="project" value="UniProtKB"/>
</dbReference>
<dbReference type="CDD" id="cd09521">
    <property type="entry name" value="SAM_ASZ1"/>
    <property type="match status" value="1"/>
</dbReference>
<dbReference type="FunFam" id="1.25.40.20:FF:000192">
    <property type="entry name" value="Ankyrin repeat, SAM and basic leucine zipper domain-containing 1"/>
    <property type="match status" value="1"/>
</dbReference>
<dbReference type="FunFam" id="1.10.150.50:FF:000060">
    <property type="entry name" value="Ankyrin repeat, SAM and basic leucine zipper domain-containing protein 1"/>
    <property type="match status" value="1"/>
</dbReference>
<dbReference type="Gene3D" id="1.25.40.20">
    <property type="entry name" value="Ankyrin repeat-containing domain"/>
    <property type="match status" value="2"/>
</dbReference>
<dbReference type="Gene3D" id="1.10.150.50">
    <property type="entry name" value="Transcription Factor, Ets-1"/>
    <property type="match status" value="1"/>
</dbReference>
<dbReference type="InterPro" id="IPR002110">
    <property type="entry name" value="Ankyrin_rpt"/>
</dbReference>
<dbReference type="InterPro" id="IPR036770">
    <property type="entry name" value="Ankyrin_rpt-contain_sf"/>
</dbReference>
<dbReference type="InterPro" id="IPR042650">
    <property type="entry name" value="Asz1_SAM"/>
</dbReference>
<dbReference type="InterPro" id="IPR001660">
    <property type="entry name" value="SAM"/>
</dbReference>
<dbReference type="InterPro" id="IPR013761">
    <property type="entry name" value="SAM/pointed_sf"/>
</dbReference>
<dbReference type="PANTHER" id="PTHR24157">
    <property type="entry name" value="ANKYRIN REPEAT, SAM AND BASIC LEUCINE ZIPPER DOMAIN-CONTAINING PROTEIN 1"/>
    <property type="match status" value="1"/>
</dbReference>
<dbReference type="PANTHER" id="PTHR24157:SF3">
    <property type="entry name" value="ANKYRIN REPEAT, SAM AND BASIC LEUCINE ZIPPER DOMAIN-CONTAINING PROTEIN 1"/>
    <property type="match status" value="1"/>
</dbReference>
<dbReference type="Pfam" id="PF00023">
    <property type="entry name" value="Ank"/>
    <property type="match status" value="1"/>
</dbReference>
<dbReference type="Pfam" id="PF12796">
    <property type="entry name" value="Ank_2"/>
    <property type="match status" value="1"/>
</dbReference>
<dbReference type="Pfam" id="PF07647">
    <property type="entry name" value="SAM_2"/>
    <property type="match status" value="1"/>
</dbReference>
<dbReference type="PRINTS" id="PR01415">
    <property type="entry name" value="ANKYRIN"/>
</dbReference>
<dbReference type="SMART" id="SM00248">
    <property type="entry name" value="ANK"/>
    <property type="match status" value="5"/>
</dbReference>
<dbReference type="SUPFAM" id="SSF48403">
    <property type="entry name" value="Ankyrin repeat"/>
    <property type="match status" value="1"/>
</dbReference>
<dbReference type="SUPFAM" id="SSF140860">
    <property type="entry name" value="Pseudo ankyrin repeat-like"/>
    <property type="match status" value="1"/>
</dbReference>
<dbReference type="PROSITE" id="PS50297">
    <property type="entry name" value="ANK_REP_REGION"/>
    <property type="match status" value="1"/>
</dbReference>
<dbReference type="PROSITE" id="PS50088">
    <property type="entry name" value="ANK_REPEAT"/>
    <property type="match status" value="3"/>
</dbReference>
<organism>
    <name type="scientific">Saimiri boliviensis boliviensis</name>
    <name type="common">Bolivian squirrel monkey</name>
    <dbReference type="NCBI Taxonomy" id="39432"/>
    <lineage>
        <taxon>Eukaryota</taxon>
        <taxon>Metazoa</taxon>
        <taxon>Chordata</taxon>
        <taxon>Craniata</taxon>
        <taxon>Vertebrata</taxon>
        <taxon>Euteleostomi</taxon>
        <taxon>Mammalia</taxon>
        <taxon>Eutheria</taxon>
        <taxon>Euarchontoglires</taxon>
        <taxon>Primates</taxon>
        <taxon>Haplorrhini</taxon>
        <taxon>Platyrrhini</taxon>
        <taxon>Cebidae</taxon>
        <taxon>Saimiriinae</taxon>
        <taxon>Saimiri</taxon>
    </lineage>
</organism>
<protein>
    <recommendedName>
        <fullName>Ankyrin repeat, SAM and basic leucine zipper domain-containing protein 1</fullName>
    </recommendedName>
    <alternativeName>
        <fullName>Germ cell-specific ankyrin, SAM and basic leucine zipper domain-containing protein</fullName>
    </alternativeName>
</protein>
<proteinExistence type="inferred from homology"/>
<comment type="function">
    <text evidence="1">Plays a central role during spermatogenesis by repressing transposable elements and preventing their mobilization, which is essential for the germline integrity. Acts via the piRNA metabolic process, which mediates the repression of transposable elements during meiosis by forming complexes composed of piRNAs and Piwi proteins and governs the methylation and subsequent repression of transposons. Its association with pi-bodies suggests a participation in the primary piRNAs metabolic process. Required prior to the pachytene stage to facilitate the production of multiple types of piRNAs, including those associated with repeats involved in the regulation of retrotransposons. May act by mediating protein-protein interactions during germ cell maturation (By similarity).</text>
</comment>
<comment type="subunit">
    <text evidence="1">Interacts with DDX4, PIWIL1, RANBP9 and TDRD1.</text>
</comment>
<comment type="subcellular location">
    <subcellularLocation>
        <location evidence="1">Cytoplasm</location>
    </subcellularLocation>
    <text evidence="1">Component of the meiotic nuage, also named P granule, a germ-cell-specific organelle required to repress transposon activity during meiosis. Specifically localizes to pi-bodies, a subset of the nuage which contains primary piRNAs (By similarity).</text>
</comment>